<reference key="1">
    <citation type="submission" date="2004-06" db="EMBL/GenBank/DDBJ databases">
        <authorList>
            <person name="Birren B.W."/>
            <person name="Stange-Thomann N."/>
            <person name="Hafez N."/>
            <person name="DeCaprio D."/>
            <person name="Fisher S."/>
            <person name="Butler J."/>
            <person name="Elkins T."/>
            <person name="Kodira C.D."/>
            <person name="Major J."/>
            <person name="Wang S."/>
            <person name="Nicol R."/>
            <person name="Nusbaum C."/>
        </authorList>
    </citation>
    <scope>NUCLEOTIDE SEQUENCE [LARGE SCALE GENOMIC DNA]</scope>
    <source>
        <strain>ATCC 33453 / NBRC 100688 / NCTC 11704 / L1</strain>
    </source>
</reference>
<evidence type="ECO:0000255" key="1">
    <source>
        <dbReference type="HAMAP-Rule" id="MF_00238"/>
    </source>
</evidence>
<protein>
    <recommendedName>
        <fullName evidence="1">Cytidylate kinase</fullName>
        <shortName evidence="1">CK</shortName>
        <ecNumber evidence="1">2.7.4.25</ecNumber>
    </recommendedName>
    <alternativeName>
        <fullName evidence="1">Cytidine monophosphate kinase</fullName>
        <shortName evidence="1">CMP kinase</shortName>
    </alternativeName>
</protein>
<gene>
    <name evidence="1" type="primary">cmk</name>
    <name type="ordered locus">Mfl198</name>
</gene>
<name>KCY_MESFL</name>
<keyword id="KW-0067">ATP-binding</keyword>
<keyword id="KW-0963">Cytoplasm</keyword>
<keyword id="KW-0418">Kinase</keyword>
<keyword id="KW-0547">Nucleotide-binding</keyword>
<keyword id="KW-1185">Reference proteome</keyword>
<keyword id="KW-0808">Transferase</keyword>
<accession>Q6F1R8</accession>
<comment type="catalytic activity">
    <reaction evidence="1">
        <text>CMP + ATP = CDP + ADP</text>
        <dbReference type="Rhea" id="RHEA:11600"/>
        <dbReference type="ChEBI" id="CHEBI:30616"/>
        <dbReference type="ChEBI" id="CHEBI:58069"/>
        <dbReference type="ChEBI" id="CHEBI:60377"/>
        <dbReference type="ChEBI" id="CHEBI:456216"/>
        <dbReference type="EC" id="2.7.4.25"/>
    </reaction>
</comment>
<comment type="catalytic activity">
    <reaction evidence="1">
        <text>dCMP + ATP = dCDP + ADP</text>
        <dbReference type="Rhea" id="RHEA:25094"/>
        <dbReference type="ChEBI" id="CHEBI:30616"/>
        <dbReference type="ChEBI" id="CHEBI:57566"/>
        <dbReference type="ChEBI" id="CHEBI:58593"/>
        <dbReference type="ChEBI" id="CHEBI:456216"/>
        <dbReference type="EC" id="2.7.4.25"/>
    </reaction>
</comment>
<comment type="subcellular location">
    <subcellularLocation>
        <location evidence="1">Cytoplasm</location>
    </subcellularLocation>
</comment>
<comment type="similarity">
    <text evidence="1">Belongs to the cytidylate kinase family. Type 1 subfamily.</text>
</comment>
<sequence length="219" mass="24998">MKRKIVIAVDGTAGSGKTATFNTVAKKIGYEFIDTGLMYRAFTLLCIESEIDFNNKEEIIESLKKFDFSVKNNKPHLNGKEVEKRIQENDIVKFINYVTPIPEVRKFMVEAQRAMVKGGGYIEIGRDITTVVLPNADLKIFLDSSVEARAERRFKQNERLGIKNNNLNEIKNSIINRDEQDFKNGLRKAEDAWLIDNSNIPIQDVVNMVIDKIKELEGN</sequence>
<feature type="chain" id="PRO_0000131932" description="Cytidylate kinase">
    <location>
        <begin position="1"/>
        <end position="219"/>
    </location>
</feature>
<feature type="binding site" evidence="1">
    <location>
        <begin position="11"/>
        <end position="19"/>
    </location>
    <ligand>
        <name>ATP</name>
        <dbReference type="ChEBI" id="CHEBI:30616"/>
    </ligand>
</feature>
<dbReference type="EC" id="2.7.4.25" evidence="1"/>
<dbReference type="EMBL" id="AE017263">
    <property type="protein sequence ID" value="AAT75555.1"/>
    <property type="molecule type" value="Genomic_DNA"/>
</dbReference>
<dbReference type="RefSeq" id="WP_011183095.1">
    <property type="nucleotide sequence ID" value="NC_006055.1"/>
</dbReference>
<dbReference type="RefSeq" id="YP_053439.1">
    <property type="nucleotide sequence ID" value="NC_006055.1"/>
</dbReference>
<dbReference type="SMR" id="Q6F1R8"/>
<dbReference type="STRING" id="265311.Mfl198"/>
<dbReference type="PaxDb" id="265311-Mfl198"/>
<dbReference type="EnsemblBacteria" id="AAT75555">
    <property type="protein sequence ID" value="AAT75555"/>
    <property type="gene ID" value="Mfl198"/>
</dbReference>
<dbReference type="GeneID" id="2898283"/>
<dbReference type="KEGG" id="mfl:Mfl198"/>
<dbReference type="PATRIC" id="fig|265311.5.peg.199"/>
<dbReference type="eggNOG" id="COG0283">
    <property type="taxonomic scope" value="Bacteria"/>
</dbReference>
<dbReference type="HOGENOM" id="CLU_079959_0_2_14"/>
<dbReference type="OrthoDB" id="9807434at2"/>
<dbReference type="Proteomes" id="UP000006647">
    <property type="component" value="Chromosome"/>
</dbReference>
<dbReference type="GO" id="GO:0005737">
    <property type="term" value="C:cytoplasm"/>
    <property type="evidence" value="ECO:0007669"/>
    <property type="project" value="UniProtKB-SubCell"/>
</dbReference>
<dbReference type="GO" id="GO:0005524">
    <property type="term" value="F:ATP binding"/>
    <property type="evidence" value="ECO:0007669"/>
    <property type="project" value="UniProtKB-UniRule"/>
</dbReference>
<dbReference type="GO" id="GO:0036430">
    <property type="term" value="F:CMP kinase activity"/>
    <property type="evidence" value="ECO:0007669"/>
    <property type="project" value="RHEA"/>
</dbReference>
<dbReference type="GO" id="GO:0036431">
    <property type="term" value="F:dCMP kinase activity"/>
    <property type="evidence" value="ECO:0007669"/>
    <property type="project" value="RHEA"/>
</dbReference>
<dbReference type="GO" id="GO:0006220">
    <property type="term" value="P:pyrimidine nucleotide metabolic process"/>
    <property type="evidence" value="ECO:0007669"/>
    <property type="project" value="UniProtKB-UniRule"/>
</dbReference>
<dbReference type="CDD" id="cd02020">
    <property type="entry name" value="CMPK"/>
    <property type="match status" value="1"/>
</dbReference>
<dbReference type="Gene3D" id="3.40.50.300">
    <property type="entry name" value="P-loop containing nucleotide triphosphate hydrolases"/>
    <property type="match status" value="1"/>
</dbReference>
<dbReference type="HAMAP" id="MF_00238">
    <property type="entry name" value="Cytidyl_kinase_type1"/>
    <property type="match status" value="1"/>
</dbReference>
<dbReference type="InterPro" id="IPR003136">
    <property type="entry name" value="Cytidylate_kin"/>
</dbReference>
<dbReference type="InterPro" id="IPR011994">
    <property type="entry name" value="Cytidylate_kinase_dom"/>
</dbReference>
<dbReference type="InterPro" id="IPR027417">
    <property type="entry name" value="P-loop_NTPase"/>
</dbReference>
<dbReference type="NCBIfam" id="TIGR00017">
    <property type="entry name" value="cmk"/>
    <property type="match status" value="1"/>
</dbReference>
<dbReference type="Pfam" id="PF02224">
    <property type="entry name" value="Cytidylate_kin"/>
    <property type="match status" value="1"/>
</dbReference>
<dbReference type="SUPFAM" id="SSF52540">
    <property type="entry name" value="P-loop containing nucleoside triphosphate hydrolases"/>
    <property type="match status" value="1"/>
</dbReference>
<organism>
    <name type="scientific">Mesoplasma florum (strain ATCC 33453 / NBRC 100688 / NCTC 11704 / L1)</name>
    <name type="common">Acholeplasma florum</name>
    <dbReference type="NCBI Taxonomy" id="265311"/>
    <lineage>
        <taxon>Bacteria</taxon>
        <taxon>Bacillati</taxon>
        <taxon>Mycoplasmatota</taxon>
        <taxon>Mollicutes</taxon>
        <taxon>Entomoplasmatales</taxon>
        <taxon>Entomoplasmataceae</taxon>
        <taxon>Mesoplasma</taxon>
    </lineage>
</organism>
<proteinExistence type="inferred from homology"/>